<proteinExistence type="evidence at transcript level"/>
<gene>
    <name type="ordered locus">At5g20050</name>
    <name type="ORF">F28I16.200</name>
</gene>
<name>Y5005_ARATH</name>
<feature type="signal peptide" evidence="2">
    <location>
        <begin position="1"/>
        <end position="23"/>
    </location>
</feature>
<feature type="chain" id="PRO_0000389472" description="Probable receptor-like protein kinase At5g20050">
    <location>
        <begin position="24"/>
        <end position="452"/>
    </location>
</feature>
<feature type="topological domain" description="Extracellular" evidence="2">
    <location>
        <begin position="24"/>
        <end position="33"/>
    </location>
</feature>
<feature type="transmembrane region" description="Helical" evidence="2">
    <location>
        <begin position="34"/>
        <end position="54"/>
    </location>
</feature>
<feature type="topological domain" description="Cytoplasmic" evidence="2">
    <location>
        <begin position="55"/>
        <end position="452"/>
    </location>
</feature>
<feature type="domain" description="Protein kinase" evidence="3">
    <location>
        <begin position="103"/>
        <end position="392"/>
    </location>
</feature>
<feature type="active site" description="Proton acceptor" evidence="3 4">
    <location>
        <position position="236"/>
    </location>
</feature>
<feature type="binding site" evidence="3">
    <location>
        <begin position="109"/>
        <end position="117"/>
    </location>
    <ligand>
        <name>ATP</name>
        <dbReference type="ChEBI" id="CHEBI:30616"/>
    </ligand>
</feature>
<feature type="binding site" evidence="3">
    <location>
        <position position="131"/>
    </location>
    <ligand>
        <name>ATP</name>
        <dbReference type="ChEBI" id="CHEBI:30616"/>
    </ligand>
</feature>
<feature type="modified residue" description="Phosphotyrosine" evidence="1">
    <location>
        <position position="178"/>
    </location>
</feature>
<feature type="modified residue" description="Phosphothreonine" evidence="1">
    <location>
        <position position="270"/>
    </location>
</feature>
<feature type="modified residue" description="Phosphothreonine" evidence="1">
    <location>
        <position position="275"/>
    </location>
</feature>
<feature type="sequence conflict" description="In Ref. 4; AAM63226." evidence="5" ref="4">
    <original>N</original>
    <variation>K</variation>
    <location>
        <position position="7"/>
    </location>
</feature>
<feature type="sequence conflict" description="In Ref. 4; AAM63226." evidence="5" ref="4">
    <original>K</original>
    <variation>E</variation>
    <location>
        <position position="63"/>
    </location>
</feature>
<feature type="sequence conflict" description="In Ref. 4; AAM63226." evidence="5" ref="4">
    <original>A</original>
    <variation>V</variation>
    <location>
        <position position="70"/>
    </location>
</feature>
<feature type="sequence conflict" description="In Ref. 4; AAM63226." evidence="5" ref="4">
    <original>D</original>
    <variation>E</variation>
    <location>
        <position position="193"/>
    </location>
</feature>
<organism>
    <name type="scientific">Arabidopsis thaliana</name>
    <name type="common">Mouse-ear cress</name>
    <dbReference type="NCBI Taxonomy" id="3702"/>
    <lineage>
        <taxon>Eukaryota</taxon>
        <taxon>Viridiplantae</taxon>
        <taxon>Streptophyta</taxon>
        <taxon>Embryophyta</taxon>
        <taxon>Tracheophyta</taxon>
        <taxon>Spermatophyta</taxon>
        <taxon>Magnoliopsida</taxon>
        <taxon>eudicotyledons</taxon>
        <taxon>Gunneridae</taxon>
        <taxon>Pentapetalae</taxon>
        <taxon>rosids</taxon>
        <taxon>malvids</taxon>
        <taxon>Brassicales</taxon>
        <taxon>Brassicaceae</taxon>
        <taxon>Camelineae</taxon>
        <taxon>Arabidopsis</taxon>
    </lineage>
</organism>
<protein>
    <recommendedName>
        <fullName>Probable receptor-like protein kinase At5g20050</fullName>
        <ecNumber>2.7.11.1</ecNumber>
    </recommendedName>
</protein>
<dbReference type="EC" id="2.7.11.1"/>
<dbReference type="EMBL" id="AF296836">
    <property type="status" value="NOT_ANNOTATED_CDS"/>
    <property type="molecule type" value="Genomic_DNA"/>
</dbReference>
<dbReference type="EMBL" id="CP002688">
    <property type="protein sequence ID" value="AED92786.1"/>
    <property type="molecule type" value="Genomic_DNA"/>
</dbReference>
<dbReference type="EMBL" id="AY037215">
    <property type="protein sequence ID" value="AAK59800.1"/>
    <property type="molecule type" value="mRNA"/>
</dbReference>
<dbReference type="EMBL" id="BT002682">
    <property type="protein sequence ID" value="AAO11598.1"/>
    <property type="molecule type" value="mRNA"/>
</dbReference>
<dbReference type="EMBL" id="AY086017">
    <property type="protein sequence ID" value="AAM63226.1"/>
    <property type="molecule type" value="mRNA"/>
</dbReference>
<dbReference type="RefSeq" id="NP_197505.1">
    <property type="nucleotide sequence ID" value="NM_122012.3"/>
</dbReference>
<dbReference type="SMR" id="Q94C25"/>
<dbReference type="BioGRID" id="17403">
    <property type="interactions" value="1"/>
</dbReference>
<dbReference type="FunCoup" id="Q94C25">
    <property type="interactions" value="873"/>
</dbReference>
<dbReference type="IntAct" id="Q94C25">
    <property type="interactions" value="1"/>
</dbReference>
<dbReference type="STRING" id="3702.Q94C25"/>
<dbReference type="iPTMnet" id="Q94C25"/>
<dbReference type="PaxDb" id="3702-AT5G20050.1"/>
<dbReference type="ProteomicsDB" id="243068"/>
<dbReference type="EnsemblPlants" id="AT5G20050.1">
    <property type="protein sequence ID" value="AT5G20050.1"/>
    <property type="gene ID" value="AT5G20050"/>
</dbReference>
<dbReference type="GeneID" id="832127"/>
<dbReference type="Gramene" id="AT5G20050.1">
    <property type="protein sequence ID" value="AT5G20050.1"/>
    <property type="gene ID" value="AT5G20050"/>
</dbReference>
<dbReference type="KEGG" id="ath:AT5G20050"/>
<dbReference type="Araport" id="AT5G20050"/>
<dbReference type="TAIR" id="AT5G20050"/>
<dbReference type="eggNOG" id="KOG1187">
    <property type="taxonomic scope" value="Eukaryota"/>
</dbReference>
<dbReference type="HOGENOM" id="CLU_000288_21_4_1"/>
<dbReference type="InParanoid" id="Q94C25"/>
<dbReference type="OMA" id="DENHRAI"/>
<dbReference type="OrthoDB" id="2418081at2759"/>
<dbReference type="PhylomeDB" id="Q94C25"/>
<dbReference type="PRO" id="PR:Q94C25"/>
<dbReference type="Proteomes" id="UP000006548">
    <property type="component" value="Chromosome 5"/>
</dbReference>
<dbReference type="ExpressionAtlas" id="Q94C25">
    <property type="expression patterns" value="baseline and differential"/>
</dbReference>
<dbReference type="GO" id="GO:0016020">
    <property type="term" value="C:membrane"/>
    <property type="evidence" value="ECO:0007669"/>
    <property type="project" value="UniProtKB-SubCell"/>
</dbReference>
<dbReference type="GO" id="GO:0005524">
    <property type="term" value="F:ATP binding"/>
    <property type="evidence" value="ECO:0007669"/>
    <property type="project" value="UniProtKB-KW"/>
</dbReference>
<dbReference type="GO" id="GO:0106310">
    <property type="term" value="F:protein serine kinase activity"/>
    <property type="evidence" value="ECO:0007669"/>
    <property type="project" value="RHEA"/>
</dbReference>
<dbReference type="GO" id="GO:0004674">
    <property type="term" value="F:protein serine/threonine kinase activity"/>
    <property type="evidence" value="ECO:0007669"/>
    <property type="project" value="UniProtKB-KW"/>
</dbReference>
<dbReference type="FunFam" id="1.10.510.10:FF:000537">
    <property type="entry name" value="Putative receptor-like protein kinase"/>
    <property type="match status" value="1"/>
</dbReference>
<dbReference type="FunFam" id="3.30.200.20:FF:000483">
    <property type="entry name" value="Putative receptor-like protein kinase"/>
    <property type="match status" value="1"/>
</dbReference>
<dbReference type="Gene3D" id="3.30.200.20">
    <property type="entry name" value="Phosphorylase Kinase, domain 1"/>
    <property type="match status" value="1"/>
</dbReference>
<dbReference type="Gene3D" id="1.10.510.10">
    <property type="entry name" value="Transferase(Phosphotransferase) domain 1"/>
    <property type="match status" value="1"/>
</dbReference>
<dbReference type="InterPro" id="IPR051343">
    <property type="entry name" value="G-type_lectin_kinases/EP1-like"/>
</dbReference>
<dbReference type="InterPro" id="IPR011009">
    <property type="entry name" value="Kinase-like_dom_sf"/>
</dbReference>
<dbReference type="InterPro" id="IPR000719">
    <property type="entry name" value="Prot_kinase_dom"/>
</dbReference>
<dbReference type="InterPro" id="IPR017441">
    <property type="entry name" value="Protein_kinase_ATP_BS"/>
</dbReference>
<dbReference type="InterPro" id="IPR008271">
    <property type="entry name" value="Ser/Thr_kinase_AS"/>
</dbReference>
<dbReference type="PANTHER" id="PTHR47976">
    <property type="entry name" value="G-TYPE LECTIN S-RECEPTOR-LIKE SERINE/THREONINE-PROTEIN KINASE SD2-5"/>
    <property type="match status" value="1"/>
</dbReference>
<dbReference type="PANTHER" id="PTHR47976:SF115">
    <property type="entry name" value="RECEPTOR-LIKE SERINE_THREONINE-PROTEIN KINASE"/>
    <property type="match status" value="1"/>
</dbReference>
<dbReference type="Pfam" id="PF00069">
    <property type="entry name" value="Pkinase"/>
    <property type="match status" value="1"/>
</dbReference>
<dbReference type="SMART" id="SM00220">
    <property type="entry name" value="S_TKc"/>
    <property type="match status" value="1"/>
</dbReference>
<dbReference type="SUPFAM" id="SSF56112">
    <property type="entry name" value="Protein kinase-like (PK-like)"/>
    <property type="match status" value="1"/>
</dbReference>
<dbReference type="PROSITE" id="PS00107">
    <property type="entry name" value="PROTEIN_KINASE_ATP"/>
    <property type="match status" value="1"/>
</dbReference>
<dbReference type="PROSITE" id="PS50011">
    <property type="entry name" value="PROTEIN_KINASE_DOM"/>
    <property type="match status" value="1"/>
</dbReference>
<dbReference type="PROSITE" id="PS00108">
    <property type="entry name" value="PROTEIN_KINASE_ST"/>
    <property type="match status" value="1"/>
</dbReference>
<sequence length="452" mass="51215">MEDKKANIIATILILALVVVIIAARVSLKLSKTFYLIAGVDISLILAVICFLIIRSRYNKERKLLVSRFASEGRELRIEYSFLRKVAGVPTKFKLEDLEEATDGFRSLIGKGGSGSVFKGVLKDGSQVAVKRIEGEEKGEREFRSEVAAIASVQHKNLVRLYGYSSSTSANRPRFLVYDYIVNSSLDIWIFPDRGNRGRSGGGCLSWEQRYQVAIDVAKALAYLHHDCRSKILHLDVKPENILLDENFRAVVTDFGLSKLIARDESRVLTDIRGTRGYLAPEWLLEHGISEKSDVYSYGIVLLEMIGGRRSISRVEVKETKKKKLEYFPRIVNQKMRERKIMEIVDQRLIEVNEVDEEEVMKLVCVALWCIQEKSKKRPDMTMVIEMLEGRVPVNEPPDSDVVVVDLLAADDDDASTGVRRVVNIPKLQIHRERNFRLSSICSSIISPISPR</sequence>
<comment type="catalytic activity">
    <reaction>
        <text>L-seryl-[protein] + ATP = O-phospho-L-seryl-[protein] + ADP + H(+)</text>
        <dbReference type="Rhea" id="RHEA:17989"/>
        <dbReference type="Rhea" id="RHEA-COMP:9863"/>
        <dbReference type="Rhea" id="RHEA-COMP:11604"/>
        <dbReference type="ChEBI" id="CHEBI:15378"/>
        <dbReference type="ChEBI" id="CHEBI:29999"/>
        <dbReference type="ChEBI" id="CHEBI:30616"/>
        <dbReference type="ChEBI" id="CHEBI:83421"/>
        <dbReference type="ChEBI" id="CHEBI:456216"/>
        <dbReference type="EC" id="2.7.11.1"/>
    </reaction>
</comment>
<comment type="catalytic activity">
    <reaction>
        <text>L-threonyl-[protein] + ATP = O-phospho-L-threonyl-[protein] + ADP + H(+)</text>
        <dbReference type="Rhea" id="RHEA:46608"/>
        <dbReference type="Rhea" id="RHEA-COMP:11060"/>
        <dbReference type="Rhea" id="RHEA-COMP:11605"/>
        <dbReference type="ChEBI" id="CHEBI:15378"/>
        <dbReference type="ChEBI" id="CHEBI:30013"/>
        <dbReference type="ChEBI" id="CHEBI:30616"/>
        <dbReference type="ChEBI" id="CHEBI:61977"/>
        <dbReference type="ChEBI" id="CHEBI:456216"/>
        <dbReference type="EC" id="2.7.11.1"/>
    </reaction>
</comment>
<comment type="subcellular location">
    <subcellularLocation>
        <location evidence="5">Membrane</location>
        <topology evidence="5">Single-pass type I membrane protein</topology>
    </subcellularLocation>
</comment>
<comment type="similarity">
    <text evidence="3">Belongs to the protein kinase superfamily. Ser/Thr protein kinase family.</text>
</comment>
<keyword id="KW-0067">ATP-binding</keyword>
<keyword id="KW-0418">Kinase</keyword>
<keyword id="KW-0472">Membrane</keyword>
<keyword id="KW-0547">Nucleotide-binding</keyword>
<keyword id="KW-0597">Phosphoprotein</keyword>
<keyword id="KW-0675">Receptor</keyword>
<keyword id="KW-1185">Reference proteome</keyword>
<keyword id="KW-0723">Serine/threonine-protein kinase</keyword>
<keyword id="KW-0732">Signal</keyword>
<keyword id="KW-0808">Transferase</keyword>
<keyword id="KW-0812">Transmembrane</keyword>
<keyword id="KW-1133">Transmembrane helix</keyword>
<accession>Q94C25</accession>
<accession>Q8LDG4</accession>
<evidence type="ECO:0000250" key="1">
    <source>
        <dbReference type="UniProtKB" id="O48814"/>
    </source>
</evidence>
<evidence type="ECO:0000255" key="2"/>
<evidence type="ECO:0000255" key="3">
    <source>
        <dbReference type="PROSITE-ProRule" id="PRU00159"/>
    </source>
</evidence>
<evidence type="ECO:0000255" key="4">
    <source>
        <dbReference type="PROSITE-ProRule" id="PRU10027"/>
    </source>
</evidence>
<evidence type="ECO:0000305" key="5"/>
<reference key="1">
    <citation type="journal article" date="2000" name="Nature">
        <title>Sequence and analysis of chromosome 5 of the plant Arabidopsis thaliana.</title>
        <authorList>
            <person name="Tabata S."/>
            <person name="Kaneko T."/>
            <person name="Nakamura Y."/>
            <person name="Kotani H."/>
            <person name="Kato T."/>
            <person name="Asamizu E."/>
            <person name="Miyajima N."/>
            <person name="Sasamoto S."/>
            <person name="Kimura T."/>
            <person name="Hosouchi T."/>
            <person name="Kawashima K."/>
            <person name="Kohara M."/>
            <person name="Matsumoto M."/>
            <person name="Matsuno A."/>
            <person name="Muraki A."/>
            <person name="Nakayama S."/>
            <person name="Nakazaki N."/>
            <person name="Naruo K."/>
            <person name="Okumura S."/>
            <person name="Shinpo S."/>
            <person name="Takeuchi C."/>
            <person name="Wada T."/>
            <person name="Watanabe A."/>
            <person name="Yamada M."/>
            <person name="Yasuda M."/>
            <person name="Sato S."/>
            <person name="de la Bastide M."/>
            <person name="Huang E."/>
            <person name="Spiegel L."/>
            <person name="Gnoj L."/>
            <person name="O'Shaughnessy A."/>
            <person name="Preston R."/>
            <person name="Habermann K."/>
            <person name="Murray J."/>
            <person name="Johnson D."/>
            <person name="Rohlfing T."/>
            <person name="Nelson J."/>
            <person name="Stoneking T."/>
            <person name="Pepin K."/>
            <person name="Spieth J."/>
            <person name="Sekhon M."/>
            <person name="Armstrong J."/>
            <person name="Becker M."/>
            <person name="Belter E."/>
            <person name="Cordum H."/>
            <person name="Cordes M."/>
            <person name="Courtney L."/>
            <person name="Courtney W."/>
            <person name="Dante M."/>
            <person name="Du H."/>
            <person name="Edwards J."/>
            <person name="Fryman J."/>
            <person name="Haakensen B."/>
            <person name="Lamar E."/>
            <person name="Latreille P."/>
            <person name="Leonard S."/>
            <person name="Meyer R."/>
            <person name="Mulvaney E."/>
            <person name="Ozersky P."/>
            <person name="Riley A."/>
            <person name="Strowmatt C."/>
            <person name="Wagner-McPherson C."/>
            <person name="Wollam A."/>
            <person name="Yoakum M."/>
            <person name="Bell M."/>
            <person name="Dedhia N."/>
            <person name="Parnell L."/>
            <person name="Shah R."/>
            <person name="Rodriguez M."/>
            <person name="Hoon See L."/>
            <person name="Vil D."/>
            <person name="Baker J."/>
            <person name="Kirchoff K."/>
            <person name="Toth K."/>
            <person name="King L."/>
            <person name="Bahret A."/>
            <person name="Miller B."/>
            <person name="Marra M.A."/>
            <person name="Martienssen R."/>
            <person name="McCombie W.R."/>
            <person name="Wilson R.K."/>
            <person name="Murphy G."/>
            <person name="Bancroft I."/>
            <person name="Volckaert G."/>
            <person name="Wambutt R."/>
            <person name="Duesterhoeft A."/>
            <person name="Stiekema W."/>
            <person name="Pohl T."/>
            <person name="Entian K.-D."/>
            <person name="Terryn N."/>
            <person name="Hartley N."/>
            <person name="Bent E."/>
            <person name="Johnson S."/>
            <person name="Langham S.-A."/>
            <person name="McCullagh B."/>
            <person name="Robben J."/>
            <person name="Grymonprez B."/>
            <person name="Zimmermann W."/>
            <person name="Ramsperger U."/>
            <person name="Wedler H."/>
            <person name="Balke K."/>
            <person name="Wedler E."/>
            <person name="Peters S."/>
            <person name="van Staveren M."/>
            <person name="Dirkse W."/>
            <person name="Mooijman P."/>
            <person name="Klein Lankhorst R."/>
            <person name="Weitzenegger T."/>
            <person name="Bothe G."/>
            <person name="Rose M."/>
            <person name="Hauf J."/>
            <person name="Berneiser S."/>
            <person name="Hempel S."/>
            <person name="Feldpausch M."/>
            <person name="Lamberth S."/>
            <person name="Villarroel R."/>
            <person name="Gielen J."/>
            <person name="Ardiles W."/>
            <person name="Bents O."/>
            <person name="Lemcke K."/>
            <person name="Kolesov G."/>
            <person name="Mayer K.F.X."/>
            <person name="Rudd S."/>
            <person name="Schoof H."/>
            <person name="Schueller C."/>
            <person name="Zaccaria P."/>
            <person name="Mewes H.-W."/>
            <person name="Bevan M."/>
            <person name="Fransz P.F."/>
        </authorList>
    </citation>
    <scope>NUCLEOTIDE SEQUENCE [LARGE SCALE GENOMIC DNA]</scope>
    <source>
        <strain>cv. Columbia</strain>
    </source>
</reference>
<reference key="2">
    <citation type="journal article" date="2017" name="Plant J.">
        <title>Araport11: a complete reannotation of the Arabidopsis thaliana reference genome.</title>
        <authorList>
            <person name="Cheng C.Y."/>
            <person name="Krishnakumar V."/>
            <person name="Chan A.P."/>
            <person name="Thibaud-Nissen F."/>
            <person name="Schobel S."/>
            <person name="Town C.D."/>
        </authorList>
    </citation>
    <scope>GENOME REANNOTATION</scope>
    <source>
        <strain>cv. Columbia</strain>
    </source>
</reference>
<reference key="3">
    <citation type="journal article" date="2003" name="Science">
        <title>Empirical analysis of transcriptional activity in the Arabidopsis genome.</title>
        <authorList>
            <person name="Yamada K."/>
            <person name="Lim J."/>
            <person name="Dale J.M."/>
            <person name="Chen H."/>
            <person name="Shinn P."/>
            <person name="Palm C.J."/>
            <person name="Southwick A.M."/>
            <person name="Wu H.C."/>
            <person name="Kim C.J."/>
            <person name="Nguyen M."/>
            <person name="Pham P.K."/>
            <person name="Cheuk R.F."/>
            <person name="Karlin-Newmann G."/>
            <person name="Liu S.X."/>
            <person name="Lam B."/>
            <person name="Sakano H."/>
            <person name="Wu T."/>
            <person name="Yu G."/>
            <person name="Miranda M."/>
            <person name="Quach H.L."/>
            <person name="Tripp M."/>
            <person name="Chang C.H."/>
            <person name="Lee J.M."/>
            <person name="Toriumi M.J."/>
            <person name="Chan M.M."/>
            <person name="Tang C.C."/>
            <person name="Onodera C.S."/>
            <person name="Deng J.M."/>
            <person name="Akiyama K."/>
            <person name="Ansari Y."/>
            <person name="Arakawa T."/>
            <person name="Banh J."/>
            <person name="Banno F."/>
            <person name="Bowser L."/>
            <person name="Brooks S.Y."/>
            <person name="Carninci P."/>
            <person name="Chao Q."/>
            <person name="Choy N."/>
            <person name="Enju A."/>
            <person name="Goldsmith A.D."/>
            <person name="Gurjal M."/>
            <person name="Hansen N.F."/>
            <person name="Hayashizaki Y."/>
            <person name="Johnson-Hopson C."/>
            <person name="Hsuan V.W."/>
            <person name="Iida K."/>
            <person name="Karnes M."/>
            <person name="Khan S."/>
            <person name="Koesema E."/>
            <person name="Ishida J."/>
            <person name="Jiang P.X."/>
            <person name="Jones T."/>
            <person name="Kawai J."/>
            <person name="Kamiya A."/>
            <person name="Meyers C."/>
            <person name="Nakajima M."/>
            <person name="Narusaka M."/>
            <person name="Seki M."/>
            <person name="Sakurai T."/>
            <person name="Satou M."/>
            <person name="Tamse R."/>
            <person name="Vaysberg M."/>
            <person name="Wallender E.K."/>
            <person name="Wong C."/>
            <person name="Yamamura Y."/>
            <person name="Yuan S."/>
            <person name="Shinozaki K."/>
            <person name="Davis R.W."/>
            <person name="Theologis A."/>
            <person name="Ecker J.R."/>
        </authorList>
    </citation>
    <scope>NUCLEOTIDE SEQUENCE [LARGE SCALE MRNA]</scope>
    <source>
        <strain>cv. Columbia</strain>
    </source>
</reference>
<reference key="4">
    <citation type="submission" date="2002-03" db="EMBL/GenBank/DDBJ databases">
        <title>Full-length cDNA from Arabidopsis thaliana.</title>
        <authorList>
            <person name="Brover V.V."/>
            <person name="Troukhan M.E."/>
            <person name="Alexandrov N.A."/>
            <person name="Lu Y.-P."/>
            <person name="Flavell R.B."/>
            <person name="Feldmann K.A."/>
        </authorList>
    </citation>
    <scope>NUCLEOTIDE SEQUENCE [LARGE SCALE MRNA]</scope>
</reference>